<sequence length="992" mass="107502">MGMRSAARMPKLTRRSRILIMIALGVIVLLLAGPRLIDAYVDWLWFGELGYRSVFTTMLATRIVVCLVAGVVVGGIVFGGLALAYRTRPVFVPDADNDPVARYRAVVLARLRLVGIGIPAAIGLLAGIVAQSYWARIQLFLHGGDFGVRDPQFGRDLGFYAFELPFYRLMLSYMLVSVFLAFVANLVAHYIFGGIRLSGRTGALSRSARVQLVSLVGVLVLLKAVAYWLDRYELLSHTRGGKPFTGAGYTDINAVLPAKLILMAIALICAAAVFSAIALRDLRIPAIGLVLLLLSSLIVGAGWPLIVEQISVKPNAAQKESEYISRSITATRQAYGLTSDVVTYRNYSGDSPATAQQVAADRATTSNIRLLDPTIVSPAFTQFQQGKNFYYFPDQLSIDRYLDRNGNLRDYVVAARELNPDRLIDNQRDWINRHTVYTHGNGFIASPANTVRGIANDPNQNGGYPEFLVNVVGANGTVVSDGPAPLDQPRIYFGPVISNTSADYAIVGRNGDDREYDYETNIDTKRYTYTGSGGVPLGGWLARSVFAAKFAERNFLFSNVIGSNSKILFNRDPAQRVEAVAPWLTTDSAVYPAIVNKRLVWIVDGYTTLDNYPYSELTSLSSATADSNEVAFNRLVPDKKVSYIRNSVKATVDAYDGTVTLYQQDEKDPVLKAWMQVFPGTVKPKSDIAPELAEHLRYPEDLFKVQRMLLAKYHVNDPVTFFSTSDFWDVPLDPNPTASSYQPPYYIVAKNIAKDDNSASYQLISAMNRFKRDYLAAYISASSDPATYGNLTVLTIPGQVNGPKLANNAITTDPAVSQDLGVIGRDNQNRIRWGNLLTLPVARGGLLYVEPVYASPGASDAASSYPRLIRVAMMYNDKVGYGPTVRDALTGLFGPGAGATATGIAPTEAAVPPSPAANPPPPASGPQPPPVTAAPPVPVGAVTLSPAKVAALQEIQAAIGAARDAQKKGDFAAYGSALQRLDEAITKFNDAG</sequence>
<gene>
    <name type="ordered locus">MRA_3227</name>
</gene>
<accession>A5U7L0</accession>
<comment type="subcellular location">
    <subcellularLocation>
        <location evidence="1">Cell membrane</location>
        <topology evidence="1">Multi-pass membrane protein</topology>
    </subcellularLocation>
</comment>
<comment type="similarity">
    <text evidence="1">Belongs to the UPF0182 family.</text>
</comment>
<reference key="1">
    <citation type="journal article" date="2008" name="PLoS ONE">
        <title>Genetic basis of virulence attenuation revealed by comparative genomic analysis of Mycobacterium tuberculosis strain H37Ra versus H37Rv.</title>
        <authorList>
            <person name="Zheng H."/>
            <person name="Lu L."/>
            <person name="Wang B."/>
            <person name="Pu S."/>
            <person name="Zhang X."/>
            <person name="Zhu G."/>
            <person name="Shi W."/>
            <person name="Zhang L."/>
            <person name="Wang H."/>
            <person name="Wang S."/>
            <person name="Zhao G."/>
            <person name="Zhang Y."/>
        </authorList>
    </citation>
    <scope>NUCLEOTIDE SEQUENCE [LARGE SCALE GENOMIC DNA]</scope>
    <source>
        <strain>ATCC 25177 / H37Ra</strain>
    </source>
</reference>
<protein>
    <recommendedName>
        <fullName evidence="1">UPF0182 protein MRA_3227</fullName>
    </recommendedName>
</protein>
<proteinExistence type="inferred from homology"/>
<organism>
    <name type="scientific">Mycobacterium tuberculosis (strain ATCC 25177 / H37Ra)</name>
    <dbReference type="NCBI Taxonomy" id="419947"/>
    <lineage>
        <taxon>Bacteria</taxon>
        <taxon>Bacillati</taxon>
        <taxon>Actinomycetota</taxon>
        <taxon>Actinomycetes</taxon>
        <taxon>Mycobacteriales</taxon>
        <taxon>Mycobacteriaceae</taxon>
        <taxon>Mycobacterium</taxon>
        <taxon>Mycobacterium tuberculosis complex</taxon>
    </lineage>
</organism>
<keyword id="KW-1003">Cell membrane</keyword>
<keyword id="KW-0472">Membrane</keyword>
<keyword id="KW-1185">Reference proteome</keyword>
<keyword id="KW-0812">Transmembrane</keyword>
<keyword id="KW-1133">Transmembrane helix</keyword>
<name>Y3227_MYCTA</name>
<feature type="chain" id="PRO_0000323478" description="UPF0182 protein MRA_3227">
    <location>
        <begin position="1"/>
        <end position="992"/>
    </location>
</feature>
<feature type="transmembrane region" description="Helical" evidence="1">
    <location>
        <begin position="18"/>
        <end position="38"/>
    </location>
</feature>
<feature type="transmembrane region" description="Helical" evidence="1">
    <location>
        <begin position="63"/>
        <end position="83"/>
    </location>
</feature>
<feature type="transmembrane region" description="Helical" evidence="1">
    <location>
        <begin position="113"/>
        <end position="133"/>
    </location>
</feature>
<feature type="transmembrane region" description="Helical" evidence="1">
    <location>
        <begin position="175"/>
        <end position="195"/>
    </location>
</feature>
<feature type="transmembrane region" description="Helical" evidence="1">
    <location>
        <begin position="210"/>
        <end position="230"/>
    </location>
</feature>
<feature type="transmembrane region" description="Helical" evidence="1">
    <location>
        <begin position="259"/>
        <end position="279"/>
    </location>
</feature>
<feature type="transmembrane region" description="Helical" evidence="1">
    <location>
        <begin position="287"/>
        <end position="307"/>
    </location>
</feature>
<feature type="region of interest" description="Disordered" evidence="2">
    <location>
        <begin position="906"/>
        <end position="938"/>
    </location>
</feature>
<feature type="compositionally biased region" description="Pro residues" evidence="2">
    <location>
        <begin position="912"/>
        <end position="938"/>
    </location>
</feature>
<dbReference type="EMBL" id="CP000611">
    <property type="protein sequence ID" value="ABQ75010.1"/>
    <property type="molecule type" value="Genomic_DNA"/>
</dbReference>
<dbReference type="RefSeq" id="WP_003899961.1">
    <property type="nucleotide sequence ID" value="NZ_CP016972.1"/>
</dbReference>
<dbReference type="SMR" id="A5U7L0"/>
<dbReference type="KEGG" id="mra:MRA_3227"/>
<dbReference type="eggNOG" id="COG1615">
    <property type="taxonomic scope" value="Bacteria"/>
</dbReference>
<dbReference type="HOGENOM" id="CLU_007733_1_0_11"/>
<dbReference type="Proteomes" id="UP000001988">
    <property type="component" value="Chromosome"/>
</dbReference>
<dbReference type="GO" id="GO:0005576">
    <property type="term" value="C:extracellular region"/>
    <property type="evidence" value="ECO:0007669"/>
    <property type="project" value="TreeGrafter"/>
</dbReference>
<dbReference type="GO" id="GO:0005886">
    <property type="term" value="C:plasma membrane"/>
    <property type="evidence" value="ECO:0007669"/>
    <property type="project" value="UniProtKB-SubCell"/>
</dbReference>
<dbReference type="HAMAP" id="MF_01600">
    <property type="entry name" value="UPF0182"/>
    <property type="match status" value="1"/>
</dbReference>
<dbReference type="InterPro" id="IPR005372">
    <property type="entry name" value="UPF0182"/>
</dbReference>
<dbReference type="NCBIfam" id="NF000825">
    <property type="entry name" value="PRK00068.1"/>
    <property type="match status" value="1"/>
</dbReference>
<dbReference type="NCBIfam" id="NF009097">
    <property type="entry name" value="PRK12438.1"/>
    <property type="match status" value="1"/>
</dbReference>
<dbReference type="PANTHER" id="PTHR39344">
    <property type="entry name" value="UPF0182 PROTEIN SLL1060"/>
    <property type="match status" value="1"/>
</dbReference>
<dbReference type="PANTHER" id="PTHR39344:SF1">
    <property type="entry name" value="UPF0182 PROTEIN SLL1060"/>
    <property type="match status" value="1"/>
</dbReference>
<dbReference type="Pfam" id="PF03699">
    <property type="entry name" value="UPF0182"/>
    <property type="match status" value="1"/>
</dbReference>
<evidence type="ECO:0000255" key="1">
    <source>
        <dbReference type="HAMAP-Rule" id="MF_01600"/>
    </source>
</evidence>
<evidence type="ECO:0000256" key="2">
    <source>
        <dbReference type="SAM" id="MobiDB-lite"/>
    </source>
</evidence>